<feature type="chain" id="PRO_0000156500" description="Polyamine aminopropyltransferase 2">
    <location>
        <begin position="1"/>
        <end position="510"/>
    </location>
</feature>
<feature type="transmembrane region" description="Helical" evidence="1">
    <location>
        <begin position="6"/>
        <end position="26"/>
    </location>
</feature>
<feature type="transmembrane region" description="Helical" evidence="1">
    <location>
        <begin position="38"/>
        <end position="58"/>
    </location>
</feature>
<feature type="transmembrane region" description="Helical" evidence="1">
    <location>
        <begin position="74"/>
        <end position="94"/>
    </location>
</feature>
<feature type="transmembrane region" description="Helical" evidence="1">
    <location>
        <begin position="102"/>
        <end position="122"/>
    </location>
</feature>
<feature type="transmembrane region" description="Helical" evidence="1">
    <location>
        <begin position="140"/>
        <end position="160"/>
    </location>
</feature>
<feature type="transmembrane region" description="Helical" evidence="1">
    <location>
        <begin position="165"/>
        <end position="185"/>
    </location>
</feature>
<feature type="domain" description="PABS" evidence="1">
    <location>
        <begin position="205"/>
        <end position="449"/>
    </location>
</feature>
<feature type="region of interest" description="Spermidine synthase">
    <location>
        <begin position="207"/>
        <end position="456"/>
    </location>
</feature>
<feature type="active site" description="Proton acceptor" evidence="1">
    <location>
        <position position="370"/>
    </location>
</feature>
<feature type="binding site" evidence="1">
    <location>
        <position position="244"/>
    </location>
    <ligand>
        <name>S-methyl-5'-thioadenosine</name>
        <dbReference type="ChEBI" id="CHEBI:17509"/>
    </ligand>
</feature>
<feature type="binding site" evidence="1">
    <location>
        <position position="274"/>
    </location>
    <ligand>
        <name>spermidine</name>
        <dbReference type="ChEBI" id="CHEBI:57834"/>
    </ligand>
</feature>
<feature type="binding site" evidence="1">
    <location>
        <position position="298"/>
    </location>
    <ligand>
        <name>spermidine</name>
        <dbReference type="ChEBI" id="CHEBI:57834"/>
    </ligand>
</feature>
<feature type="binding site" evidence="1">
    <location>
        <position position="318"/>
    </location>
    <ligand>
        <name>S-methyl-5'-thioadenosine</name>
        <dbReference type="ChEBI" id="CHEBI:17509"/>
    </ligand>
</feature>
<feature type="binding site" evidence="1">
    <location>
        <begin position="352"/>
        <end position="353"/>
    </location>
    <ligand>
        <name>S-methyl-5'-thioadenosine</name>
        <dbReference type="ChEBI" id="CHEBI:17509"/>
    </ligand>
</feature>
<comment type="function">
    <text evidence="1">Catalyzes the irreversible transfer of a propylamine group from the amino donor S-adenosylmethioninamine (decarboxy-AdoMet) to putrescine (1,4-diaminobutane) to yield spermidine.</text>
</comment>
<comment type="catalytic activity">
    <reaction evidence="1">
        <text>S-adenosyl 3-(methylsulfanyl)propylamine + putrescine = S-methyl-5'-thioadenosine + spermidine + H(+)</text>
        <dbReference type="Rhea" id="RHEA:12721"/>
        <dbReference type="ChEBI" id="CHEBI:15378"/>
        <dbReference type="ChEBI" id="CHEBI:17509"/>
        <dbReference type="ChEBI" id="CHEBI:57443"/>
        <dbReference type="ChEBI" id="CHEBI:57834"/>
        <dbReference type="ChEBI" id="CHEBI:326268"/>
        <dbReference type="EC" id="2.5.1.16"/>
    </reaction>
</comment>
<comment type="pathway">
    <text evidence="1">Amine and polyamine biosynthesis; spermidine biosynthesis; spermidine from putrescine: step 1/1.</text>
</comment>
<comment type="subunit">
    <text evidence="1">Homodimer or homotetramer.</text>
</comment>
<comment type="subcellular location">
    <subcellularLocation>
        <location evidence="1">Cell membrane</location>
        <topology evidence="1">Multi-pass membrane protein</topology>
    </subcellularLocation>
</comment>
<comment type="similarity">
    <text evidence="1">Belongs to the spermidine/spermine synthase family.</text>
</comment>
<name>SPEE2_RALN1</name>
<reference key="1">
    <citation type="journal article" date="2002" name="Nature">
        <title>Genome sequence of the plant pathogen Ralstonia solanacearum.</title>
        <authorList>
            <person name="Salanoubat M."/>
            <person name="Genin S."/>
            <person name="Artiguenave F."/>
            <person name="Gouzy J."/>
            <person name="Mangenot S."/>
            <person name="Arlat M."/>
            <person name="Billault A."/>
            <person name="Brottier P."/>
            <person name="Camus J.-C."/>
            <person name="Cattolico L."/>
            <person name="Chandler M."/>
            <person name="Choisne N."/>
            <person name="Claudel-Renard C."/>
            <person name="Cunnac S."/>
            <person name="Demange N."/>
            <person name="Gaspin C."/>
            <person name="Lavie M."/>
            <person name="Moisan A."/>
            <person name="Robert C."/>
            <person name="Saurin W."/>
            <person name="Schiex T."/>
            <person name="Siguier P."/>
            <person name="Thebault P."/>
            <person name="Whalen M."/>
            <person name="Wincker P."/>
            <person name="Levy M."/>
            <person name="Weissenbach J."/>
            <person name="Boucher C.A."/>
        </authorList>
    </citation>
    <scope>NUCLEOTIDE SEQUENCE [LARGE SCALE GENOMIC DNA]</scope>
    <source>
        <strain>ATCC BAA-1114 / GMI1000</strain>
    </source>
</reference>
<dbReference type="EC" id="2.5.1.16" evidence="1"/>
<dbReference type="EMBL" id="AL646053">
    <property type="protein sequence ID" value="CAD18488.1"/>
    <property type="molecule type" value="Genomic_DNA"/>
</dbReference>
<dbReference type="SMR" id="Q8XQC5"/>
<dbReference type="STRING" id="267608.RSp1337"/>
<dbReference type="EnsemblBacteria" id="CAD18488">
    <property type="protein sequence ID" value="CAD18488"/>
    <property type="gene ID" value="RSp1337"/>
</dbReference>
<dbReference type="KEGG" id="rso:RSp1337"/>
<dbReference type="eggNOG" id="COG4262">
    <property type="taxonomic scope" value="Bacteria"/>
</dbReference>
<dbReference type="HOGENOM" id="CLU_034289_1_0_4"/>
<dbReference type="UniPathway" id="UPA00248">
    <property type="reaction ID" value="UER00314"/>
</dbReference>
<dbReference type="Proteomes" id="UP000001436">
    <property type="component" value="Plasmid megaplasmid Rsp"/>
</dbReference>
<dbReference type="GO" id="GO:0005886">
    <property type="term" value="C:plasma membrane"/>
    <property type="evidence" value="ECO:0007669"/>
    <property type="project" value="UniProtKB-SubCell"/>
</dbReference>
<dbReference type="GO" id="GO:0004766">
    <property type="term" value="F:spermidine synthase activity"/>
    <property type="evidence" value="ECO:0007669"/>
    <property type="project" value="UniProtKB-UniRule"/>
</dbReference>
<dbReference type="GO" id="GO:0010487">
    <property type="term" value="F:thermospermine synthase activity"/>
    <property type="evidence" value="ECO:0007669"/>
    <property type="project" value="UniProtKB-ARBA"/>
</dbReference>
<dbReference type="GO" id="GO:0008295">
    <property type="term" value="P:spermidine biosynthetic process"/>
    <property type="evidence" value="ECO:0007669"/>
    <property type="project" value="UniProtKB-UniRule"/>
</dbReference>
<dbReference type="CDD" id="cd02440">
    <property type="entry name" value="AdoMet_MTases"/>
    <property type="match status" value="1"/>
</dbReference>
<dbReference type="Gene3D" id="3.40.50.150">
    <property type="entry name" value="Vaccinia Virus protein VP39"/>
    <property type="match status" value="1"/>
</dbReference>
<dbReference type="HAMAP" id="MF_00198">
    <property type="entry name" value="Spermidine_synth"/>
    <property type="match status" value="1"/>
</dbReference>
<dbReference type="InterPro" id="IPR030374">
    <property type="entry name" value="PABS"/>
</dbReference>
<dbReference type="InterPro" id="IPR029063">
    <property type="entry name" value="SAM-dependent_MTases_sf"/>
</dbReference>
<dbReference type="InterPro" id="IPR001045">
    <property type="entry name" value="Spermi_synthase"/>
</dbReference>
<dbReference type="NCBIfam" id="NF002956">
    <property type="entry name" value="PRK03612.1"/>
    <property type="match status" value="1"/>
</dbReference>
<dbReference type="PANTHER" id="PTHR43317">
    <property type="entry name" value="THERMOSPERMINE SYNTHASE ACAULIS5"/>
    <property type="match status" value="1"/>
</dbReference>
<dbReference type="PANTHER" id="PTHR43317:SF1">
    <property type="entry name" value="THERMOSPERMINE SYNTHASE ACAULIS5"/>
    <property type="match status" value="1"/>
</dbReference>
<dbReference type="Pfam" id="PF01564">
    <property type="entry name" value="Spermine_synth"/>
    <property type="match status" value="1"/>
</dbReference>
<dbReference type="SUPFAM" id="SSF53335">
    <property type="entry name" value="S-adenosyl-L-methionine-dependent methyltransferases"/>
    <property type="match status" value="1"/>
</dbReference>
<dbReference type="PROSITE" id="PS51006">
    <property type="entry name" value="PABS_2"/>
    <property type="match status" value="1"/>
</dbReference>
<sequence>MNRGNALLVLAVFVVASCGLAYELIAGALASYLLGDSILQFSSIIGAYLFAMGIGSWVSRYVADDALLARFVDLELLVGLFGGVSAAALFLLFALESAPFRLVLYALVTVIGVLVGMEIPLVMRMLHRRQAKFSDLVSRVLTFDYLGALAVSLLFPLVLAPRLGLVRTGFLFGLCNTAIAVWTLWHFRAELGLSARLRGAMAWRAGMVGAALLAGFAASDRLTHWSERALFGDEIIHAISSPYQRLVVTRWKDDLRLYINGNLQFSSRDEYRYHEALVLPALESVRGARRVLVLGGGDGLALRQILKYPQVEHVTLVDLDPRMTSLFSHAEALVALNQHAFSDPRVTVVNADAGQWLQTAADMFDVAIVDFPDPSNFSIGKLYSVPFYRLLSRHVADTGLVVIQATSPYFAPRSYWCVDATLKEAGYRTWPYHALVPSFGEWGFILAAPGRADFRPPTTYRVPTRFLDADTTHQMFSFAPDMPRPQVEPNRLNNQSLVRYFEEDWHGVLR</sequence>
<organism>
    <name type="scientific">Ralstonia nicotianae (strain ATCC BAA-1114 / GMI1000)</name>
    <name type="common">Ralstonia solanacearum</name>
    <dbReference type="NCBI Taxonomy" id="267608"/>
    <lineage>
        <taxon>Bacteria</taxon>
        <taxon>Pseudomonadati</taxon>
        <taxon>Pseudomonadota</taxon>
        <taxon>Betaproteobacteria</taxon>
        <taxon>Burkholderiales</taxon>
        <taxon>Burkholderiaceae</taxon>
        <taxon>Ralstonia</taxon>
        <taxon>Ralstonia solanacearum species complex</taxon>
    </lineage>
</organism>
<accession>Q8XQC5</accession>
<protein>
    <recommendedName>
        <fullName evidence="1">Polyamine aminopropyltransferase 2</fullName>
    </recommendedName>
    <alternativeName>
        <fullName evidence="1">Putrescine aminopropyltransferase 2</fullName>
        <shortName evidence="1">PAPT 2</shortName>
    </alternativeName>
    <alternativeName>
        <fullName evidence="1">Spermidine synthase 2</fullName>
        <shortName evidence="1">SPDS 2</shortName>
        <shortName evidence="1">SPDSY 2</shortName>
        <ecNumber evidence="1">2.5.1.16</ecNumber>
    </alternativeName>
</protein>
<keyword id="KW-1003">Cell membrane</keyword>
<keyword id="KW-0472">Membrane</keyword>
<keyword id="KW-0614">Plasmid</keyword>
<keyword id="KW-0620">Polyamine biosynthesis</keyword>
<keyword id="KW-1185">Reference proteome</keyword>
<keyword id="KW-0745">Spermidine biosynthesis</keyword>
<keyword id="KW-0808">Transferase</keyword>
<keyword id="KW-0812">Transmembrane</keyword>
<keyword id="KW-1133">Transmembrane helix</keyword>
<evidence type="ECO:0000255" key="1">
    <source>
        <dbReference type="HAMAP-Rule" id="MF_00198"/>
    </source>
</evidence>
<proteinExistence type="inferred from homology"/>
<geneLocation type="plasmid">
    <name>megaplasmid Rsp</name>
</geneLocation>
<gene>
    <name evidence="1" type="primary">speE2</name>
    <name type="synonym">speE1</name>
    <name type="ordered locus">RSp1337</name>
    <name type="ORF">RS04762</name>
</gene>